<reference key="1">
    <citation type="journal article" date="1999" name="Biochem. J.">
        <title>Identification of peroxisomal proteins by using M13 phage protein VI phage display: molecular evidence that mammalian peroxisomes contain a 2,4-dienoyl-CoA reductase.</title>
        <authorList>
            <person name="Fransen M."/>
            <person name="Van Veldhoven P.P."/>
            <person name="Subramani S."/>
        </authorList>
    </citation>
    <scope>NUCLEOTIDE SEQUENCE [MRNA]</scope>
    <scope>SUBCELLULAR LOCATION</scope>
    <scope>CATALYTIC ACTIVITY</scope>
    <scope>FUNCTION</scope>
    <source>
        <tissue>Liver</tissue>
    </source>
</reference>
<reference key="2">
    <citation type="journal article" date="2004" name="Genome Res.">
        <title>The status, quality, and expansion of the NIH full-length cDNA project: the Mammalian Gene Collection (MGC).</title>
        <authorList>
            <consortium name="The MGC Project Team"/>
        </authorList>
    </citation>
    <scope>NUCLEOTIDE SEQUENCE [LARGE SCALE MRNA]</scope>
    <source>
        <tissue>Lung</tissue>
    </source>
</reference>
<reference key="3">
    <citation type="journal article" date="2001" name="Biochim. Biophys. Acta">
        <title>Characterisation of human peroxisomal 2,4-dienoyl-CoA reductase.</title>
        <authorList>
            <person name="De Nys K."/>
            <person name="Meyhi E."/>
            <person name="Mannaerts G.P."/>
            <person name="Fransen M."/>
            <person name="Van Veldhoven P.P."/>
        </authorList>
    </citation>
    <scope>CATALYTIC ACTIVITY</scope>
    <scope>FUNCTION</scope>
</reference>
<name>DECR2_RAT</name>
<proteinExistence type="evidence at protein level"/>
<evidence type="ECO:0000250" key="1"/>
<evidence type="ECO:0000250" key="2">
    <source>
        <dbReference type="UniProtKB" id="Q9NUI1"/>
    </source>
</evidence>
<evidence type="ECO:0000269" key="3">
    <source>
    </source>
</evidence>
<evidence type="ECO:0000269" key="4">
    <source>
    </source>
</evidence>
<evidence type="ECO:0000305" key="5"/>
<comment type="function">
    <text evidence="3 4">Auxiliary enzyme of beta-oxidation. Participates in the degradation of unsaturated fatty enoyl-CoA esters having double bonds in both even- and odd-numbered positions in peroxisome. Catalyzes the NADP-dependent reduction of 2,4-dienoyl-CoA to yield trans-3-enoyl-CoA. Has activity towards short and medium chain 2,4-dienoyl-CoAs, but also towards 2,4,7,10,13,16,19-docosaheptaenoyl-CoA, suggesting that it does not constitute a rate limiting step in the peroxisomal degradation of docosahexaenoic acid.</text>
</comment>
<comment type="catalytic activity">
    <reaction evidence="3 4">
        <text>a (2E,4Z)-dienoyl-CoA + NADPH + H(+) = a 4,5-saturated-(3E)-enoyl-CoA + NADP(+)</text>
        <dbReference type="Rhea" id="RHEA:61892"/>
        <dbReference type="ChEBI" id="CHEBI:15378"/>
        <dbReference type="ChEBI" id="CHEBI:57783"/>
        <dbReference type="ChEBI" id="CHEBI:58349"/>
        <dbReference type="ChEBI" id="CHEBI:85099"/>
        <dbReference type="ChEBI" id="CHEBI:85493"/>
        <dbReference type="EC" id="1.3.1.124"/>
    </reaction>
</comment>
<comment type="catalytic activity">
    <reaction evidence="3 4">
        <text>a (2E,4E)-dienoyl-CoA + NADPH + H(+) = a 4,5-saturated-(3E)-enoyl-CoA + NADP(+)</text>
        <dbReference type="Rhea" id="RHEA:45912"/>
        <dbReference type="ChEBI" id="CHEBI:15378"/>
        <dbReference type="ChEBI" id="CHEBI:57783"/>
        <dbReference type="ChEBI" id="CHEBI:58349"/>
        <dbReference type="ChEBI" id="CHEBI:85101"/>
        <dbReference type="ChEBI" id="CHEBI:85493"/>
        <dbReference type="EC" id="1.3.1.124"/>
    </reaction>
</comment>
<comment type="catalytic activity">
    <reaction evidence="4">
        <text>(2E,4E)-hexadienoyl-CoA + NADPH + H(+) = (3E)-hexenoyl-CoA + NADP(+)</text>
        <dbReference type="Rhea" id="RHEA:44912"/>
        <dbReference type="ChEBI" id="CHEBI:15378"/>
        <dbReference type="ChEBI" id="CHEBI:57783"/>
        <dbReference type="ChEBI" id="CHEBI:58349"/>
        <dbReference type="ChEBI" id="CHEBI:84788"/>
        <dbReference type="ChEBI" id="CHEBI:84790"/>
    </reaction>
</comment>
<comment type="catalytic activity">
    <reaction evidence="4">
        <text>(2E,4E)-decadienoyl-CoA + NADPH + H(+) = (3E)-decenoyl-CoA + NADP(+)</text>
        <dbReference type="Rhea" id="RHEA:44916"/>
        <dbReference type="ChEBI" id="CHEBI:15378"/>
        <dbReference type="ChEBI" id="CHEBI:57783"/>
        <dbReference type="ChEBI" id="CHEBI:58349"/>
        <dbReference type="ChEBI" id="CHEBI:62244"/>
        <dbReference type="ChEBI" id="CHEBI:84793"/>
    </reaction>
</comment>
<comment type="catalytic activity">
    <reaction evidence="4">
        <text>(2E,4Z,7Z,10Z,13Z,16Z,19Z)-docosaheptaenoyl-CoA + NADPH + H(+) = (3E,7Z,10Z,13Z,16Z,19Z)-docosahexaenoyl-CoA + NADP(+)</text>
        <dbReference type="Rhea" id="RHEA:44920"/>
        <dbReference type="ChEBI" id="CHEBI:15378"/>
        <dbReference type="ChEBI" id="CHEBI:57783"/>
        <dbReference type="ChEBI" id="CHEBI:58349"/>
        <dbReference type="ChEBI" id="CHEBI:77559"/>
        <dbReference type="ChEBI" id="CHEBI:84791"/>
    </reaction>
</comment>
<comment type="subunit">
    <text evidence="2">Monomer, dimer and oligomer.</text>
</comment>
<comment type="subcellular location">
    <subcellularLocation>
        <location evidence="3">Peroxisome</location>
    </subcellularLocation>
</comment>
<comment type="similarity">
    <text evidence="5">Belongs to the short-chain dehydrogenases/reductases (SDR) family. 2,4-dienoyl-CoA reductase subfamily.</text>
</comment>
<keyword id="KW-0007">Acetylation</keyword>
<keyword id="KW-0276">Fatty acid metabolism</keyword>
<keyword id="KW-0443">Lipid metabolism</keyword>
<keyword id="KW-0521">NADP</keyword>
<keyword id="KW-0560">Oxidoreductase</keyword>
<keyword id="KW-0576">Peroxisome</keyword>
<keyword id="KW-0597">Phosphoprotein</keyword>
<keyword id="KW-1185">Reference proteome</keyword>
<sequence length="292" mass="31292">MTQQPPDVEEDDCLSEYHHLFCPDLLQDKVAFITGGGSGIGFRIAEIFMRHGCHTVIVSRSLPRVSEAAKKLVAATGKRCLPLSMDVRVPPAVMAAVDQALKEFGKIDILINCAAGNFLCPASALSFNAFKTVVDIDTLGTFNVSRVLYEKFFRDHGGVIVNITATLSMRGQVLQLHAGAAKAAVDAMTRHLAVEWGPQNIRVNSLAPGAISGTEGLRRLGGPKASSKFKYLSSPIPRLGTKTEIAHSVLYLASPLASYVSGIVLVVDGGSWMTLPNDIGRLLEFESSSAKL</sequence>
<dbReference type="EC" id="1.3.1.124" evidence="3 4"/>
<dbReference type="EMBL" id="AF044574">
    <property type="protein sequence ID" value="AAD02333.1"/>
    <property type="molecule type" value="mRNA"/>
</dbReference>
<dbReference type="EMBL" id="BC070959">
    <property type="protein sequence ID" value="AAH70959.1"/>
    <property type="molecule type" value="mRNA"/>
</dbReference>
<dbReference type="RefSeq" id="NP_741993.1">
    <property type="nucleotide sequence ID" value="NM_171996.3"/>
</dbReference>
<dbReference type="RefSeq" id="XP_006246086.1">
    <property type="nucleotide sequence ID" value="XM_006246024.5"/>
</dbReference>
<dbReference type="RefSeq" id="XP_038942721.1">
    <property type="nucleotide sequence ID" value="XM_039086793.2"/>
</dbReference>
<dbReference type="RefSeq" id="XP_063125886.1">
    <property type="nucleotide sequence ID" value="XM_063269816.1"/>
</dbReference>
<dbReference type="SMR" id="Q9Z2M4"/>
<dbReference type="FunCoup" id="Q9Z2M4">
    <property type="interactions" value="968"/>
</dbReference>
<dbReference type="IntAct" id="Q9Z2M4">
    <property type="interactions" value="5"/>
</dbReference>
<dbReference type="SwissLipids" id="SLP:000001051"/>
<dbReference type="iPTMnet" id="Q9Z2M4"/>
<dbReference type="PhosphoSitePlus" id="Q9Z2M4"/>
<dbReference type="PaxDb" id="10116-ENSRNOP00000027518"/>
<dbReference type="Ensembl" id="ENSRNOT00000027518.6">
    <property type="protein sequence ID" value="ENSRNOP00000027518.5"/>
    <property type="gene ID" value="ENSRNOG00000032152.5"/>
</dbReference>
<dbReference type="GeneID" id="64461"/>
<dbReference type="KEGG" id="rno:64461"/>
<dbReference type="UCSC" id="RGD:71002">
    <property type="organism name" value="rat"/>
</dbReference>
<dbReference type="AGR" id="RGD:71002"/>
<dbReference type="CTD" id="26063"/>
<dbReference type="RGD" id="71002">
    <property type="gene designation" value="Decr2"/>
</dbReference>
<dbReference type="eggNOG" id="KOG0725">
    <property type="taxonomic scope" value="Eukaryota"/>
</dbReference>
<dbReference type="GeneTree" id="ENSGT00440000033742"/>
<dbReference type="HOGENOM" id="CLU_010194_1_2_1"/>
<dbReference type="InParanoid" id="Q9Z2M4"/>
<dbReference type="BRENDA" id="1.3.1.124">
    <property type="organism ID" value="5301"/>
</dbReference>
<dbReference type="Reactome" id="R-RNO-390247">
    <property type="pathway name" value="Beta-oxidation of very long chain fatty acids"/>
</dbReference>
<dbReference type="Reactome" id="R-RNO-9033241">
    <property type="pathway name" value="Peroxisomal protein import"/>
</dbReference>
<dbReference type="PRO" id="PR:Q9Z2M4"/>
<dbReference type="Proteomes" id="UP000002494">
    <property type="component" value="Chromosome 10"/>
</dbReference>
<dbReference type="Bgee" id="ENSRNOG00000050424">
    <property type="expression patterns" value="Expressed in adult mammalian kidney and 19 other cell types or tissues"/>
</dbReference>
<dbReference type="ExpressionAtlas" id="Q9Z2M4">
    <property type="expression patterns" value="baseline and differential"/>
</dbReference>
<dbReference type="GO" id="GO:0005778">
    <property type="term" value="C:peroxisomal membrane"/>
    <property type="evidence" value="ECO:0000314"/>
    <property type="project" value="UniProtKB"/>
</dbReference>
<dbReference type="GO" id="GO:0005777">
    <property type="term" value="C:peroxisome"/>
    <property type="evidence" value="ECO:0000314"/>
    <property type="project" value="HGNC-UCL"/>
</dbReference>
<dbReference type="GO" id="GO:0008670">
    <property type="term" value="F:2,4-dienoyl-CoA reductase (NADPH) activity"/>
    <property type="evidence" value="ECO:0000314"/>
    <property type="project" value="UniProtKB"/>
</dbReference>
<dbReference type="GO" id="GO:0019166">
    <property type="term" value="F:trans-2-enoyl-CoA reductase (NADPH) activity"/>
    <property type="evidence" value="ECO:0000266"/>
    <property type="project" value="RGD"/>
</dbReference>
<dbReference type="GO" id="GO:0009062">
    <property type="term" value="P:fatty acid catabolic process"/>
    <property type="evidence" value="ECO:0007669"/>
    <property type="project" value="InterPro"/>
</dbReference>
<dbReference type="GO" id="GO:0006631">
    <property type="term" value="P:fatty acid metabolic process"/>
    <property type="evidence" value="ECO:0000318"/>
    <property type="project" value="GO_Central"/>
</dbReference>
<dbReference type="GO" id="GO:0006636">
    <property type="term" value="P:unsaturated fatty acid biosynthetic process"/>
    <property type="evidence" value="ECO:0000266"/>
    <property type="project" value="RGD"/>
</dbReference>
<dbReference type="CDD" id="cd05369">
    <property type="entry name" value="TER_DECR_SDR_a"/>
    <property type="match status" value="1"/>
</dbReference>
<dbReference type="FunFam" id="3.40.50.720:FF:000477">
    <property type="entry name" value="Peroxisomal 2,4-dienoyl-CoA reductase"/>
    <property type="match status" value="1"/>
</dbReference>
<dbReference type="Gene3D" id="3.40.50.720">
    <property type="entry name" value="NAD(P)-binding Rossmann-like Domain"/>
    <property type="match status" value="1"/>
</dbReference>
<dbReference type="InterPro" id="IPR045017">
    <property type="entry name" value="DECR2-like"/>
</dbReference>
<dbReference type="InterPro" id="IPR036291">
    <property type="entry name" value="NAD(P)-bd_dom_sf"/>
</dbReference>
<dbReference type="InterPro" id="IPR002347">
    <property type="entry name" value="SDR_fam"/>
</dbReference>
<dbReference type="PANTHER" id="PTHR43296">
    <property type="entry name" value="PEROXISOMAL 2,4-DIENOYL-COA REDUCTASE"/>
    <property type="match status" value="1"/>
</dbReference>
<dbReference type="PANTHER" id="PTHR43296:SF2">
    <property type="entry name" value="PEROXISOMAL 2,4-DIENOYL-COA REDUCTASE [(3E)-ENOYL-COA-PRODUCING]"/>
    <property type="match status" value="1"/>
</dbReference>
<dbReference type="Pfam" id="PF13561">
    <property type="entry name" value="adh_short_C2"/>
    <property type="match status" value="1"/>
</dbReference>
<dbReference type="PRINTS" id="PR00081">
    <property type="entry name" value="GDHRDH"/>
</dbReference>
<dbReference type="PRINTS" id="PR00080">
    <property type="entry name" value="SDRFAMILY"/>
</dbReference>
<dbReference type="SUPFAM" id="SSF51735">
    <property type="entry name" value="NAD(P)-binding Rossmann-fold domains"/>
    <property type="match status" value="1"/>
</dbReference>
<feature type="chain" id="PRO_0000054562" description="Peroxisomal 2,4-dienoyl-CoA reductase [(3E)-enoyl-CoA-producing]">
    <location>
        <begin position="1"/>
        <end position="292"/>
    </location>
</feature>
<feature type="short sequence motif" description="Microbody targeting signal">
    <location>
        <begin position="290"/>
        <end position="292"/>
    </location>
</feature>
<feature type="binding site" evidence="1">
    <location>
        <begin position="35"/>
        <end position="40"/>
    </location>
    <ligand>
        <name>NADP(+)</name>
        <dbReference type="ChEBI" id="CHEBI:58349"/>
    </ligand>
</feature>
<feature type="binding site" evidence="1">
    <location>
        <begin position="60"/>
        <end position="64"/>
    </location>
    <ligand>
        <name>NADP(+)</name>
        <dbReference type="ChEBI" id="CHEBI:58349"/>
    </ligand>
</feature>
<feature type="binding site" evidence="1">
    <location>
        <position position="60"/>
    </location>
    <ligand>
        <name>substrate</name>
    </ligand>
</feature>
<feature type="binding site" evidence="1">
    <location>
        <position position="86"/>
    </location>
    <ligand>
        <name>NADP(+)</name>
        <dbReference type="ChEBI" id="CHEBI:58349"/>
    </ligand>
</feature>
<feature type="binding site" evidence="1">
    <location>
        <position position="88"/>
    </location>
    <ligand>
        <name>substrate</name>
    </ligand>
</feature>
<feature type="binding site" evidence="1">
    <location>
        <position position="118"/>
    </location>
    <ligand>
        <name>substrate</name>
    </ligand>
</feature>
<feature type="binding site" evidence="1">
    <location>
        <begin position="126"/>
        <end position="128"/>
    </location>
    <ligand>
        <name>substrate</name>
    </ligand>
</feature>
<feature type="binding site" evidence="1">
    <location>
        <position position="182"/>
    </location>
    <ligand>
        <name>NADP(+)</name>
        <dbReference type="ChEBI" id="CHEBI:58349"/>
    </ligand>
</feature>
<feature type="binding site" evidence="1">
    <location>
        <begin position="208"/>
        <end position="214"/>
    </location>
    <ligand>
        <name>NADP(+)</name>
        <dbReference type="ChEBI" id="CHEBI:58349"/>
    </ligand>
</feature>
<feature type="binding site" evidence="1">
    <location>
        <position position="219"/>
    </location>
    <ligand>
        <name>substrate</name>
    </ligand>
</feature>
<feature type="modified residue" description="N6-acetyllysine" evidence="2">
    <location>
        <position position="151"/>
    </location>
</feature>
<feature type="modified residue" description="Phosphoserine" evidence="2">
    <location>
        <position position="287"/>
    </location>
</feature>
<feature type="modified residue" description="N6-acetyllysine" evidence="2">
    <location>
        <position position="291"/>
    </location>
</feature>
<protein>
    <recommendedName>
        <fullName>Peroxisomal 2,4-dienoyl-CoA reductase [(3E)-enoyl-CoA-producing]</fullName>
        <ecNumber evidence="3 4">1.3.1.124</ecNumber>
    </recommendedName>
    <alternativeName>
        <fullName>2,4-dienoyl-CoA reductase 2</fullName>
    </alternativeName>
    <alternativeName>
        <fullName>DCR-AKL</fullName>
    </alternativeName>
    <alternativeName>
        <fullName>pVI-AKL</fullName>
    </alternativeName>
</protein>
<organism>
    <name type="scientific">Rattus norvegicus</name>
    <name type="common">Rat</name>
    <dbReference type="NCBI Taxonomy" id="10116"/>
    <lineage>
        <taxon>Eukaryota</taxon>
        <taxon>Metazoa</taxon>
        <taxon>Chordata</taxon>
        <taxon>Craniata</taxon>
        <taxon>Vertebrata</taxon>
        <taxon>Euteleostomi</taxon>
        <taxon>Mammalia</taxon>
        <taxon>Eutheria</taxon>
        <taxon>Euarchontoglires</taxon>
        <taxon>Glires</taxon>
        <taxon>Rodentia</taxon>
        <taxon>Myomorpha</taxon>
        <taxon>Muroidea</taxon>
        <taxon>Muridae</taxon>
        <taxon>Murinae</taxon>
        <taxon>Rattus</taxon>
    </lineage>
</organism>
<gene>
    <name type="primary">Decr2</name>
</gene>
<accession>Q9Z2M4</accession>